<protein>
    <recommendedName>
        <fullName>Uncharacterized protein CXorf65 homolog</fullName>
    </recommendedName>
</protein>
<feature type="chain" id="PRO_0000346433" description="Uncharacterized protein CXorf65 homolog">
    <location>
        <begin position="1"/>
        <end position="174"/>
    </location>
</feature>
<feature type="region of interest" description="Disordered" evidence="1">
    <location>
        <begin position="138"/>
        <end position="174"/>
    </location>
</feature>
<feature type="compositionally biased region" description="Basic and acidic residues" evidence="1">
    <location>
        <begin position="162"/>
        <end position="174"/>
    </location>
</feature>
<evidence type="ECO:0000256" key="1">
    <source>
        <dbReference type="SAM" id="MobiDB-lite"/>
    </source>
</evidence>
<proteinExistence type="evidence at transcript level"/>
<dbReference type="EMBL" id="BC109548">
    <property type="protein sequence ID" value="AAI09549.1"/>
    <property type="molecule type" value="mRNA"/>
</dbReference>
<dbReference type="RefSeq" id="NP_001070500.1">
    <property type="nucleotide sequence ID" value="NM_001077032.2"/>
</dbReference>
<dbReference type="FunCoup" id="Q32LJ3">
    <property type="interactions" value="90"/>
</dbReference>
<dbReference type="PaxDb" id="9913-ENSBTAP00000043055"/>
<dbReference type="Ensembl" id="ENSBTAT00000045686.3">
    <property type="protein sequence ID" value="ENSBTAP00000043055.1"/>
    <property type="gene ID" value="ENSBTAG00000032209.3"/>
</dbReference>
<dbReference type="GeneID" id="767964"/>
<dbReference type="KEGG" id="bta:767964"/>
<dbReference type="CTD" id="103690850"/>
<dbReference type="VEuPathDB" id="HostDB:ENSBTAG00000032209"/>
<dbReference type="VGNC" id="VGNC:52762">
    <property type="gene designation" value="CXHXorf65"/>
</dbReference>
<dbReference type="eggNOG" id="ENOG502S153">
    <property type="taxonomic scope" value="Eukaryota"/>
</dbReference>
<dbReference type="GeneTree" id="ENSGT00510000049291"/>
<dbReference type="HOGENOM" id="CLU_126634_0_0_1"/>
<dbReference type="InParanoid" id="Q32LJ3"/>
<dbReference type="OMA" id="RVKMLRI"/>
<dbReference type="OrthoDB" id="2109241at2759"/>
<dbReference type="TreeFam" id="TF328811"/>
<dbReference type="Proteomes" id="UP000009136">
    <property type="component" value="Chromosome X"/>
</dbReference>
<dbReference type="Bgee" id="ENSBTAG00000032209">
    <property type="expression patterns" value="Expressed in semen and 44 other cell types or tissues"/>
</dbReference>
<dbReference type="GO" id="GO:0000978">
    <property type="term" value="F:RNA polymerase II cis-regulatory region sequence-specific DNA binding"/>
    <property type="evidence" value="ECO:0007669"/>
    <property type="project" value="Ensembl"/>
</dbReference>
<dbReference type="GO" id="GO:0006366">
    <property type="term" value="P:transcription by RNA polymerase II"/>
    <property type="evidence" value="ECO:0007669"/>
    <property type="project" value="Ensembl"/>
</dbReference>
<dbReference type="InterPro" id="IPR039471">
    <property type="entry name" value="CXorf65-like"/>
</dbReference>
<dbReference type="PANTHER" id="PTHR33887:SF4">
    <property type="entry name" value="AB2-183"/>
    <property type="match status" value="1"/>
</dbReference>
<dbReference type="PANTHER" id="PTHR33887">
    <property type="entry name" value="PB1 DOMAIN-CONTAINING PROTEIN"/>
    <property type="match status" value="1"/>
</dbReference>
<dbReference type="Pfam" id="PF15874">
    <property type="entry name" value="Il2rg"/>
    <property type="match status" value="1"/>
</dbReference>
<keyword id="KW-1185">Reference proteome</keyword>
<reference key="1">
    <citation type="submission" date="2005-11" db="EMBL/GenBank/DDBJ databases">
        <authorList>
            <consortium name="NIH - Mammalian Gene Collection (MGC) project"/>
        </authorList>
    </citation>
    <scope>NUCLEOTIDE SEQUENCE [LARGE SCALE MRNA]</scope>
    <source>
        <strain>Crossbred X Angus</strain>
        <tissue>Liver</tissue>
    </source>
</reference>
<organism>
    <name type="scientific">Bos taurus</name>
    <name type="common">Bovine</name>
    <dbReference type="NCBI Taxonomy" id="9913"/>
    <lineage>
        <taxon>Eukaryota</taxon>
        <taxon>Metazoa</taxon>
        <taxon>Chordata</taxon>
        <taxon>Craniata</taxon>
        <taxon>Vertebrata</taxon>
        <taxon>Euteleostomi</taxon>
        <taxon>Mammalia</taxon>
        <taxon>Eutheria</taxon>
        <taxon>Laurasiatheria</taxon>
        <taxon>Artiodactyla</taxon>
        <taxon>Ruminantia</taxon>
        <taxon>Pecora</taxon>
        <taxon>Bovidae</taxon>
        <taxon>Bovinae</taxon>
        <taxon>Bos</taxon>
    </lineage>
</organism>
<accession>Q32LJ3</accession>
<name>CX065_BOVIN</name>
<sequence length="174" mass="19853">MFIFIKHGDNQQFLANINCSVLLLLHYARRKVGLPKTETIDLCDETGTMKLFFLMKTPGDYANKFLTARNTYYVCKVERGAPGTRVESAYKAFVPLLKNPEPELIDALRTQCDLLERSRVKMLRIQEAKKVVPIESSVNLTSKSSGRSDEEGTTRRAPVLKTRADFVSRKDKHR</sequence>